<accession>Q20Y19</accession>
<proteinExistence type="inferred from homology"/>
<feature type="chain" id="PRO_0000359505" description="Alkyl hydroperoxide reductase AhpD">
    <location>
        <begin position="1"/>
        <end position="181"/>
    </location>
</feature>
<feature type="active site" description="Proton donor" evidence="2">
    <location>
        <position position="131"/>
    </location>
</feature>
<feature type="active site" description="Cysteine sulfenic acid (-SOH) intermediate" evidence="2">
    <location>
        <position position="134"/>
    </location>
</feature>
<feature type="disulfide bond" evidence="1">
    <location>
        <begin position="131"/>
        <end position="134"/>
    </location>
</feature>
<feature type="disulfide bond" description="Interchain (with AhpC); in linked form" evidence="2">
    <location>
        <position position="134"/>
    </location>
</feature>
<sequence>MSIDALKERIPDFAKDVRLNLSSMASDETLAPQTKYGLFVAAAVATRNPDVIAAMQAVARDNVAPAVIAAAKSAAAIMAMNNVYYRFVHLASNKDYATMPARLRMNVIANPGVDKADFELWSLAVSAINGCGMCIDSHEKVLLAAGVSTAAIQTAVRFAAIIQSVAVSIEAGAADLAMAAE</sequence>
<organism>
    <name type="scientific">Rhodopseudomonas palustris (strain BisB18)</name>
    <dbReference type="NCBI Taxonomy" id="316056"/>
    <lineage>
        <taxon>Bacteria</taxon>
        <taxon>Pseudomonadati</taxon>
        <taxon>Pseudomonadota</taxon>
        <taxon>Alphaproteobacteria</taxon>
        <taxon>Hyphomicrobiales</taxon>
        <taxon>Nitrobacteraceae</taxon>
        <taxon>Rhodopseudomonas</taxon>
    </lineage>
</organism>
<reference key="1">
    <citation type="submission" date="2006-03" db="EMBL/GenBank/DDBJ databases">
        <title>Complete sequence of Rhodopseudomonas palustris BisB18.</title>
        <authorList>
            <consortium name="US DOE Joint Genome Institute"/>
            <person name="Copeland A."/>
            <person name="Lucas S."/>
            <person name="Lapidus A."/>
            <person name="Barry K."/>
            <person name="Detter J.C."/>
            <person name="Glavina del Rio T."/>
            <person name="Hammon N."/>
            <person name="Israni S."/>
            <person name="Dalin E."/>
            <person name="Tice H."/>
            <person name="Pitluck S."/>
            <person name="Chain P."/>
            <person name="Malfatti S."/>
            <person name="Shin M."/>
            <person name="Vergez L."/>
            <person name="Schmutz J."/>
            <person name="Larimer F."/>
            <person name="Land M."/>
            <person name="Hauser L."/>
            <person name="Pelletier D.A."/>
            <person name="Kyrpides N."/>
            <person name="Anderson I."/>
            <person name="Oda Y."/>
            <person name="Harwood C.S."/>
            <person name="Richardson P."/>
        </authorList>
    </citation>
    <scope>NUCLEOTIDE SEQUENCE [LARGE SCALE GENOMIC DNA]</scope>
    <source>
        <strain>BisB18</strain>
    </source>
</reference>
<protein>
    <recommendedName>
        <fullName evidence="2">Alkyl hydroperoxide reductase AhpD</fullName>
        <ecNumber evidence="2">1.11.1.28</ecNumber>
    </recommendedName>
    <alternativeName>
        <fullName evidence="2">Alkylhydroperoxidase AhpD</fullName>
    </alternativeName>
</protein>
<dbReference type="EC" id="1.11.1.28" evidence="2"/>
<dbReference type="EMBL" id="CP000301">
    <property type="protein sequence ID" value="ABD89967.1"/>
    <property type="molecule type" value="Genomic_DNA"/>
</dbReference>
<dbReference type="SMR" id="Q20Y19"/>
<dbReference type="STRING" id="316056.RPC_4444"/>
<dbReference type="PeroxiBase" id="4606">
    <property type="entry name" value="RpAhpD_BisB18"/>
</dbReference>
<dbReference type="KEGG" id="rpc:RPC_4444"/>
<dbReference type="eggNOG" id="COG2128">
    <property type="taxonomic scope" value="Bacteria"/>
</dbReference>
<dbReference type="HOGENOM" id="CLU_105328_0_0_5"/>
<dbReference type="OrthoDB" id="9801997at2"/>
<dbReference type="GO" id="GO:0008785">
    <property type="term" value="F:alkyl hydroperoxide reductase activity"/>
    <property type="evidence" value="ECO:0007669"/>
    <property type="project" value="UniProtKB-UniRule"/>
</dbReference>
<dbReference type="GO" id="GO:0015036">
    <property type="term" value="F:disulfide oxidoreductase activity"/>
    <property type="evidence" value="ECO:0007669"/>
    <property type="project" value="TreeGrafter"/>
</dbReference>
<dbReference type="GO" id="GO:0032843">
    <property type="term" value="F:hydroperoxide reductase activity"/>
    <property type="evidence" value="ECO:0007669"/>
    <property type="project" value="InterPro"/>
</dbReference>
<dbReference type="GO" id="GO:0051920">
    <property type="term" value="F:peroxiredoxin activity"/>
    <property type="evidence" value="ECO:0007669"/>
    <property type="project" value="InterPro"/>
</dbReference>
<dbReference type="GO" id="GO:0045454">
    <property type="term" value="P:cell redox homeostasis"/>
    <property type="evidence" value="ECO:0007669"/>
    <property type="project" value="TreeGrafter"/>
</dbReference>
<dbReference type="GO" id="GO:0006979">
    <property type="term" value="P:response to oxidative stress"/>
    <property type="evidence" value="ECO:0007669"/>
    <property type="project" value="InterPro"/>
</dbReference>
<dbReference type="Gene3D" id="1.20.1290.10">
    <property type="entry name" value="AhpD-like"/>
    <property type="match status" value="1"/>
</dbReference>
<dbReference type="HAMAP" id="MF_01676">
    <property type="entry name" value="AhpD"/>
    <property type="match status" value="1"/>
</dbReference>
<dbReference type="InterPro" id="IPR004674">
    <property type="entry name" value="AhpD"/>
</dbReference>
<dbReference type="InterPro" id="IPR029032">
    <property type="entry name" value="AhpD-like"/>
</dbReference>
<dbReference type="InterPro" id="IPR004675">
    <property type="entry name" value="AhpD_core"/>
</dbReference>
<dbReference type="InterPro" id="IPR003779">
    <property type="entry name" value="CMD-like"/>
</dbReference>
<dbReference type="NCBIfam" id="TIGR00777">
    <property type="entry name" value="ahpD"/>
    <property type="match status" value="1"/>
</dbReference>
<dbReference type="NCBIfam" id="TIGR00778">
    <property type="entry name" value="ahpD_dom"/>
    <property type="match status" value="1"/>
</dbReference>
<dbReference type="PANTHER" id="PTHR33930">
    <property type="entry name" value="ALKYL HYDROPEROXIDE REDUCTASE AHPD"/>
    <property type="match status" value="1"/>
</dbReference>
<dbReference type="PANTHER" id="PTHR33930:SF7">
    <property type="entry name" value="ALKYL HYDROPEROXIDE REDUCTASE AHPD"/>
    <property type="match status" value="1"/>
</dbReference>
<dbReference type="Pfam" id="PF02627">
    <property type="entry name" value="CMD"/>
    <property type="match status" value="1"/>
</dbReference>
<dbReference type="SUPFAM" id="SSF69118">
    <property type="entry name" value="AhpD-like"/>
    <property type="match status" value="1"/>
</dbReference>
<gene>
    <name evidence="2" type="primary">ahpD</name>
    <name type="ordered locus">RPC_4444</name>
</gene>
<keyword id="KW-0049">Antioxidant</keyword>
<keyword id="KW-1015">Disulfide bond</keyword>
<keyword id="KW-0560">Oxidoreductase</keyword>
<keyword id="KW-0575">Peroxidase</keyword>
<keyword id="KW-0676">Redox-active center</keyword>
<comment type="function">
    <text evidence="2">Antioxidant protein with alkyl hydroperoxidase activity. Required for the reduction of the AhpC active site cysteine residues and for the regeneration of the AhpC enzyme activity.</text>
</comment>
<comment type="catalytic activity">
    <reaction evidence="2">
        <text>N(6)-[(R)-dihydrolipoyl]-L-lysyl-[lipoyl-carrier protein] + a hydroperoxide = N(6)-[(R)-lipoyl]-L-lysyl-[lipoyl-carrier protein] + an alcohol + H2O</text>
        <dbReference type="Rhea" id="RHEA:62636"/>
        <dbReference type="Rhea" id="RHEA-COMP:10502"/>
        <dbReference type="Rhea" id="RHEA-COMP:16355"/>
        <dbReference type="ChEBI" id="CHEBI:15377"/>
        <dbReference type="ChEBI" id="CHEBI:30879"/>
        <dbReference type="ChEBI" id="CHEBI:35924"/>
        <dbReference type="ChEBI" id="CHEBI:83099"/>
        <dbReference type="ChEBI" id="CHEBI:83100"/>
        <dbReference type="EC" id="1.11.1.28"/>
    </reaction>
</comment>
<comment type="similarity">
    <text evidence="2">Belongs to the AhpD family.</text>
</comment>
<name>AHPD_RHOPB</name>
<evidence type="ECO:0000250" key="1"/>
<evidence type="ECO:0000255" key="2">
    <source>
        <dbReference type="HAMAP-Rule" id="MF_01676"/>
    </source>
</evidence>